<name>PPR57_ARATH</name>
<keyword id="KW-1185">Reference proteome</keyword>
<keyword id="KW-0677">Repeat</keyword>
<evidence type="ECO:0000305" key="1"/>
<feature type="chain" id="PRO_0000342798" description="Pentatricopeptide repeat-containing protein At1g25360">
    <location>
        <begin position="1"/>
        <end position="790"/>
    </location>
</feature>
<feature type="repeat" description="PPR 1">
    <location>
        <begin position="48"/>
        <end position="82"/>
    </location>
</feature>
<feature type="repeat" description="PPR 2">
    <location>
        <begin position="84"/>
        <end position="109"/>
    </location>
</feature>
<feature type="repeat" description="PPR 3">
    <location>
        <begin position="112"/>
        <end position="146"/>
    </location>
</feature>
<feature type="repeat" description="PPR 4">
    <location>
        <begin position="147"/>
        <end position="182"/>
    </location>
</feature>
<feature type="repeat" description="PPR 5">
    <location>
        <begin position="183"/>
        <end position="217"/>
    </location>
</feature>
<feature type="repeat" description="PPR 6">
    <location>
        <begin position="218"/>
        <end position="248"/>
    </location>
</feature>
<feature type="repeat" description="PPR 7">
    <location>
        <begin position="250"/>
        <end position="284"/>
    </location>
</feature>
<feature type="repeat" description="PPR 8">
    <location>
        <begin position="285"/>
        <end position="315"/>
    </location>
</feature>
<feature type="repeat" description="PPR 9">
    <location>
        <begin position="319"/>
        <end position="349"/>
    </location>
</feature>
<feature type="repeat" description="PPR 10">
    <location>
        <begin position="350"/>
        <end position="384"/>
    </location>
</feature>
<feature type="repeat" description="PPR 11">
    <location>
        <begin position="385"/>
        <end position="415"/>
    </location>
</feature>
<feature type="repeat" description="PPR 12">
    <location>
        <begin position="416"/>
        <end position="450"/>
    </location>
</feature>
<feature type="repeat" description="PPR 13">
    <location>
        <begin position="451"/>
        <end position="481"/>
    </location>
</feature>
<feature type="repeat" description="PPR 14">
    <location>
        <begin position="482"/>
        <end position="516"/>
    </location>
</feature>
<feature type="repeat" description="PPR 15">
    <location>
        <begin position="517"/>
        <end position="551"/>
    </location>
</feature>
<feature type="repeat" description="PPR 16">
    <location>
        <begin position="553"/>
        <end position="583"/>
    </location>
</feature>
<feature type="region of interest" description="Type E motif">
    <location>
        <begin position="588"/>
        <end position="663"/>
    </location>
</feature>
<feature type="region of interest" description="Type E(+) motif">
    <location>
        <begin position="664"/>
        <end position="694"/>
    </location>
</feature>
<feature type="region of interest" description="Type DYW motif">
    <location>
        <begin position="695"/>
        <end position="790"/>
    </location>
</feature>
<accession>Q9FRI5</accession>
<comment type="similarity">
    <text evidence="1">Belongs to the PPR family. PCMP-H subfamily.</text>
</comment>
<comment type="online information" name="Pentatricopeptide repeat proteins">
    <link uri="https://ppr.plantenergy.uwa.edu.au"/>
</comment>
<dbReference type="EMBL" id="AC079374">
    <property type="protein sequence ID" value="AAG28801.1"/>
    <property type="molecule type" value="Genomic_DNA"/>
</dbReference>
<dbReference type="EMBL" id="CP002684">
    <property type="protein sequence ID" value="AEE30612.1"/>
    <property type="molecule type" value="Genomic_DNA"/>
</dbReference>
<dbReference type="PIR" id="E86383">
    <property type="entry name" value="E86383"/>
</dbReference>
<dbReference type="RefSeq" id="NP_173907.1">
    <property type="nucleotide sequence ID" value="NM_102346.2"/>
</dbReference>
<dbReference type="SMR" id="Q9FRI5"/>
<dbReference type="FunCoup" id="Q9FRI5">
    <property type="interactions" value="425"/>
</dbReference>
<dbReference type="STRING" id="3702.Q9FRI5"/>
<dbReference type="iPTMnet" id="Q9FRI5"/>
<dbReference type="PaxDb" id="3702-AT1G25360.1"/>
<dbReference type="EnsemblPlants" id="AT1G25360.1">
    <property type="protein sequence ID" value="AT1G25360.1"/>
    <property type="gene ID" value="AT1G25360"/>
</dbReference>
<dbReference type="GeneID" id="839121"/>
<dbReference type="Gramene" id="AT1G25360.1">
    <property type="protein sequence ID" value="AT1G25360.1"/>
    <property type="gene ID" value="AT1G25360"/>
</dbReference>
<dbReference type="KEGG" id="ath:AT1G25360"/>
<dbReference type="Araport" id="AT1G25360"/>
<dbReference type="TAIR" id="AT1G25360">
    <property type="gene designation" value="OTP90"/>
</dbReference>
<dbReference type="eggNOG" id="KOG4197">
    <property type="taxonomic scope" value="Eukaryota"/>
</dbReference>
<dbReference type="HOGENOM" id="CLU_002706_15_1_1"/>
<dbReference type="InParanoid" id="Q9FRI5"/>
<dbReference type="OMA" id="VYCKSSE"/>
<dbReference type="PhylomeDB" id="Q9FRI5"/>
<dbReference type="PRO" id="PR:Q9FRI5"/>
<dbReference type="Proteomes" id="UP000006548">
    <property type="component" value="Chromosome 1"/>
</dbReference>
<dbReference type="ExpressionAtlas" id="Q9FRI5">
    <property type="expression patterns" value="baseline and differential"/>
</dbReference>
<dbReference type="GO" id="GO:0003723">
    <property type="term" value="F:RNA binding"/>
    <property type="evidence" value="ECO:0007669"/>
    <property type="project" value="InterPro"/>
</dbReference>
<dbReference type="GO" id="GO:0008270">
    <property type="term" value="F:zinc ion binding"/>
    <property type="evidence" value="ECO:0007669"/>
    <property type="project" value="InterPro"/>
</dbReference>
<dbReference type="GO" id="GO:0009451">
    <property type="term" value="P:RNA modification"/>
    <property type="evidence" value="ECO:0007669"/>
    <property type="project" value="InterPro"/>
</dbReference>
<dbReference type="FunFam" id="1.25.40.10:FF:000566">
    <property type="entry name" value="Pentatricopeptide repeat-containing protein"/>
    <property type="match status" value="1"/>
</dbReference>
<dbReference type="FunFam" id="1.25.40.10:FF:001365">
    <property type="entry name" value="Pentatricopeptide repeat-containing protein At1g25360"/>
    <property type="match status" value="1"/>
</dbReference>
<dbReference type="FunFam" id="1.25.40.10:FF:001795">
    <property type="entry name" value="Pentatricopeptide repeat-containing protein At1g25360"/>
    <property type="match status" value="1"/>
</dbReference>
<dbReference type="FunFam" id="1.25.40.10:FF:002462">
    <property type="entry name" value="Pentatricopeptide repeat-containing protein At1g25360"/>
    <property type="match status" value="1"/>
</dbReference>
<dbReference type="Gene3D" id="1.25.40.10">
    <property type="entry name" value="Tetratricopeptide repeat domain"/>
    <property type="match status" value="5"/>
</dbReference>
<dbReference type="InterPro" id="IPR032867">
    <property type="entry name" value="DYW_dom"/>
</dbReference>
<dbReference type="InterPro" id="IPR046848">
    <property type="entry name" value="E_motif"/>
</dbReference>
<dbReference type="InterPro" id="IPR002885">
    <property type="entry name" value="Pentatricopeptide_rpt"/>
</dbReference>
<dbReference type="InterPro" id="IPR046960">
    <property type="entry name" value="PPR_At4g14850-like_plant"/>
</dbReference>
<dbReference type="InterPro" id="IPR011990">
    <property type="entry name" value="TPR-like_helical_dom_sf"/>
</dbReference>
<dbReference type="NCBIfam" id="TIGR00756">
    <property type="entry name" value="PPR"/>
    <property type="match status" value="6"/>
</dbReference>
<dbReference type="PANTHER" id="PTHR47926:SF541">
    <property type="entry name" value="DYW DOMAIN-CONTAINING PROTEIN"/>
    <property type="match status" value="1"/>
</dbReference>
<dbReference type="PANTHER" id="PTHR47926">
    <property type="entry name" value="PENTATRICOPEPTIDE REPEAT-CONTAINING PROTEIN"/>
    <property type="match status" value="1"/>
</dbReference>
<dbReference type="Pfam" id="PF14432">
    <property type="entry name" value="DYW_deaminase"/>
    <property type="match status" value="1"/>
</dbReference>
<dbReference type="Pfam" id="PF20431">
    <property type="entry name" value="E_motif"/>
    <property type="match status" value="1"/>
</dbReference>
<dbReference type="Pfam" id="PF01535">
    <property type="entry name" value="PPR"/>
    <property type="match status" value="8"/>
</dbReference>
<dbReference type="Pfam" id="PF13041">
    <property type="entry name" value="PPR_2"/>
    <property type="match status" value="3"/>
</dbReference>
<dbReference type="SUPFAM" id="SSF48452">
    <property type="entry name" value="TPR-like"/>
    <property type="match status" value="1"/>
</dbReference>
<dbReference type="PROSITE" id="PS51375">
    <property type="entry name" value="PPR"/>
    <property type="match status" value="13"/>
</dbReference>
<reference key="1">
    <citation type="journal article" date="2000" name="Nature">
        <title>Sequence and analysis of chromosome 1 of the plant Arabidopsis thaliana.</title>
        <authorList>
            <person name="Theologis A."/>
            <person name="Ecker J.R."/>
            <person name="Palm C.J."/>
            <person name="Federspiel N.A."/>
            <person name="Kaul S."/>
            <person name="White O."/>
            <person name="Alonso J."/>
            <person name="Altafi H."/>
            <person name="Araujo R."/>
            <person name="Bowman C.L."/>
            <person name="Brooks S.Y."/>
            <person name="Buehler E."/>
            <person name="Chan A."/>
            <person name="Chao Q."/>
            <person name="Chen H."/>
            <person name="Cheuk R.F."/>
            <person name="Chin C.W."/>
            <person name="Chung M.K."/>
            <person name="Conn L."/>
            <person name="Conway A.B."/>
            <person name="Conway A.R."/>
            <person name="Creasy T.H."/>
            <person name="Dewar K."/>
            <person name="Dunn P."/>
            <person name="Etgu P."/>
            <person name="Feldblyum T.V."/>
            <person name="Feng J.-D."/>
            <person name="Fong B."/>
            <person name="Fujii C.Y."/>
            <person name="Gill J.E."/>
            <person name="Goldsmith A.D."/>
            <person name="Haas B."/>
            <person name="Hansen N.F."/>
            <person name="Hughes B."/>
            <person name="Huizar L."/>
            <person name="Hunter J.L."/>
            <person name="Jenkins J."/>
            <person name="Johnson-Hopson C."/>
            <person name="Khan S."/>
            <person name="Khaykin E."/>
            <person name="Kim C.J."/>
            <person name="Koo H.L."/>
            <person name="Kremenetskaia I."/>
            <person name="Kurtz D.B."/>
            <person name="Kwan A."/>
            <person name="Lam B."/>
            <person name="Langin-Hooper S."/>
            <person name="Lee A."/>
            <person name="Lee J.M."/>
            <person name="Lenz C.A."/>
            <person name="Li J.H."/>
            <person name="Li Y.-P."/>
            <person name="Lin X."/>
            <person name="Liu S.X."/>
            <person name="Liu Z.A."/>
            <person name="Luros J.S."/>
            <person name="Maiti R."/>
            <person name="Marziali A."/>
            <person name="Militscher J."/>
            <person name="Miranda M."/>
            <person name="Nguyen M."/>
            <person name="Nierman W.C."/>
            <person name="Osborne B.I."/>
            <person name="Pai G."/>
            <person name="Peterson J."/>
            <person name="Pham P.K."/>
            <person name="Rizzo M."/>
            <person name="Rooney T."/>
            <person name="Rowley D."/>
            <person name="Sakano H."/>
            <person name="Salzberg S.L."/>
            <person name="Schwartz J.R."/>
            <person name="Shinn P."/>
            <person name="Southwick A.M."/>
            <person name="Sun H."/>
            <person name="Tallon L.J."/>
            <person name="Tambunga G."/>
            <person name="Toriumi M.J."/>
            <person name="Town C.D."/>
            <person name="Utterback T."/>
            <person name="Van Aken S."/>
            <person name="Vaysberg M."/>
            <person name="Vysotskaia V.S."/>
            <person name="Walker M."/>
            <person name="Wu D."/>
            <person name="Yu G."/>
            <person name="Fraser C.M."/>
            <person name="Venter J.C."/>
            <person name="Davis R.W."/>
        </authorList>
    </citation>
    <scope>NUCLEOTIDE SEQUENCE [LARGE SCALE GENOMIC DNA]</scope>
    <source>
        <strain>cv. Columbia</strain>
    </source>
</reference>
<reference key="2">
    <citation type="journal article" date="2017" name="Plant J.">
        <title>Araport11: a complete reannotation of the Arabidopsis thaliana reference genome.</title>
        <authorList>
            <person name="Cheng C.Y."/>
            <person name="Krishnakumar V."/>
            <person name="Chan A.P."/>
            <person name="Thibaud-Nissen F."/>
            <person name="Schobel S."/>
            <person name="Town C.D."/>
        </authorList>
    </citation>
    <scope>GENOME REANNOTATION</scope>
    <source>
        <strain>cv. Columbia</strain>
    </source>
</reference>
<reference key="3">
    <citation type="journal article" date="2004" name="Plant Cell">
        <title>Genome-wide analysis of Arabidopsis pentatricopeptide repeat proteins reveals their essential role in organelle biogenesis.</title>
        <authorList>
            <person name="Lurin C."/>
            <person name="Andres C."/>
            <person name="Aubourg S."/>
            <person name="Bellaoui M."/>
            <person name="Bitton F."/>
            <person name="Bruyere C."/>
            <person name="Caboche M."/>
            <person name="Debast C."/>
            <person name="Gualberto J."/>
            <person name="Hoffmann B."/>
            <person name="Lecharny A."/>
            <person name="Le Ret M."/>
            <person name="Martin-Magniette M.-L."/>
            <person name="Mireau H."/>
            <person name="Peeters N."/>
            <person name="Renou J.-P."/>
            <person name="Szurek B."/>
            <person name="Taconnat L."/>
            <person name="Small I."/>
        </authorList>
    </citation>
    <scope>GENE FAMILY</scope>
</reference>
<sequence>MQPNPDLVRAIANRYAANLRLCLPLRRTSLQLARAVHGNIITFGFQPRAHILNRLIDVYCKSSELNYARQLFDEISEPDKIARTTMVSGYCASGDITLARGVFEKAPVCMRDTVMYNAMITGFSHNNDGYSAINLFCKMKHEGFKPDNFTFASVLAGLALVADDEKQCVQFHAAALKSGAGYITSVSNALVSVYSKCASSPSLLHSARKVFDEILEKDERSWTTMMTGYVKNGYFDLGEELLEGMDDNMKLVAYNAMISGYVNRGFYQEALEMVRRMVSSGIELDEFTYPSVIRACATAGLLQLGKQVHAYVLRREDFSFHFDNSLVSLYYKCGKFDEARAIFEKMPAKDLVSWNALLSGYVSSGHIGEAKLIFKEMKEKNILSWMIMISGLAENGFGEEGLKLFSCMKREGFEPCDYAFSGAIKSCAVLGAYCNGQQYHAQLLKIGFDSSLSAGNALITMYAKCGVVEEARQVFRTMPCLDSVSWNALIAALGQHGHGAEAVDVYEEMLKKGIRPDRITLLTVLTACSHAGLVDQGRKYFDSMETVYRIPPGADHYARLIDLLCRSGKFSDAESVIESLPFKPTAEIWEALLSGCRVHGNMELGIIAADKLFGLIPEHDGTYMLLSNMHAATGQWEEVARVRKLMRDRGVKKEVACSWIEMETQVHTFLVDDTSHPEAEAVYIYLQDLGKEMRRLGYVPDTSFVLHDVESDGHKEDMLTTHSEKIAVAFGLMKLPPGTTIRIFKNLRTCGDCHNFFRFLSWVVQRDIILRDRKRFHHFRNGECSCGNFW</sequence>
<organism>
    <name type="scientific">Arabidopsis thaliana</name>
    <name type="common">Mouse-ear cress</name>
    <dbReference type="NCBI Taxonomy" id="3702"/>
    <lineage>
        <taxon>Eukaryota</taxon>
        <taxon>Viridiplantae</taxon>
        <taxon>Streptophyta</taxon>
        <taxon>Embryophyta</taxon>
        <taxon>Tracheophyta</taxon>
        <taxon>Spermatophyta</taxon>
        <taxon>Magnoliopsida</taxon>
        <taxon>eudicotyledons</taxon>
        <taxon>Gunneridae</taxon>
        <taxon>Pentapetalae</taxon>
        <taxon>rosids</taxon>
        <taxon>malvids</taxon>
        <taxon>Brassicales</taxon>
        <taxon>Brassicaceae</taxon>
        <taxon>Camelineae</taxon>
        <taxon>Arabidopsis</taxon>
    </lineage>
</organism>
<protein>
    <recommendedName>
        <fullName>Pentatricopeptide repeat-containing protein At1g25360</fullName>
    </recommendedName>
</protein>
<proteinExistence type="evidence at transcript level"/>
<gene>
    <name type="primary">PCMP-H74</name>
    <name type="ordered locus">At1g25360</name>
    <name type="ORF">F4F7.25</name>
</gene>